<accession>Q54IV3</accession>
<evidence type="ECO:0000250" key="1"/>
<evidence type="ECO:0000255" key="2">
    <source>
        <dbReference type="PROSITE-ProRule" id="PRU00541"/>
    </source>
</evidence>
<evidence type="ECO:0000255" key="3">
    <source>
        <dbReference type="PROSITE-ProRule" id="PRU00542"/>
    </source>
</evidence>
<evidence type="ECO:0000256" key="4">
    <source>
        <dbReference type="SAM" id="MobiDB-lite"/>
    </source>
</evidence>
<evidence type="ECO:0000305" key="5"/>
<dbReference type="EC" id="3.6.4.13"/>
<dbReference type="EMBL" id="AAFI02000112">
    <property type="protein sequence ID" value="EAL63199.1"/>
    <property type="molecule type" value="Genomic_DNA"/>
</dbReference>
<dbReference type="RefSeq" id="XP_636700.1">
    <property type="nucleotide sequence ID" value="XM_631608.1"/>
</dbReference>
<dbReference type="SMR" id="Q54IV3"/>
<dbReference type="FunCoup" id="Q54IV3">
    <property type="interactions" value="258"/>
</dbReference>
<dbReference type="STRING" id="44689.Q54IV3"/>
<dbReference type="PaxDb" id="44689-DDB0233432"/>
<dbReference type="EnsemblProtists" id="EAL63199">
    <property type="protein sequence ID" value="EAL63199"/>
    <property type="gene ID" value="DDB_G0288501"/>
</dbReference>
<dbReference type="GeneID" id="8626657"/>
<dbReference type="KEGG" id="ddi:DDB_G0288501"/>
<dbReference type="dictyBase" id="DDB_G0288501">
    <property type="gene designation" value="ddx42"/>
</dbReference>
<dbReference type="VEuPathDB" id="AmoebaDB:DDB_G0288501"/>
<dbReference type="eggNOG" id="KOG0339">
    <property type="taxonomic scope" value="Eukaryota"/>
</dbReference>
<dbReference type="HOGENOM" id="CLU_003041_9_0_1"/>
<dbReference type="InParanoid" id="Q54IV3"/>
<dbReference type="OMA" id="FDRNNNE"/>
<dbReference type="PhylomeDB" id="Q54IV3"/>
<dbReference type="PRO" id="PR:Q54IV3"/>
<dbReference type="Proteomes" id="UP000002195">
    <property type="component" value="Chromosome 5"/>
</dbReference>
<dbReference type="GO" id="GO:0005634">
    <property type="term" value="C:nucleus"/>
    <property type="evidence" value="ECO:0000318"/>
    <property type="project" value="GO_Central"/>
</dbReference>
<dbReference type="GO" id="GO:0005524">
    <property type="term" value="F:ATP binding"/>
    <property type="evidence" value="ECO:0007669"/>
    <property type="project" value="UniProtKB-KW"/>
</dbReference>
<dbReference type="GO" id="GO:0016887">
    <property type="term" value="F:ATP hydrolysis activity"/>
    <property type="evidence" value="ECO:0007669"/>
    <property type="project" value="RHEA"/>
</dbReference>
<dbReference type="GO" id="GO:0003723">
    <property type="term" value="F:RNA binding"/>
    <property type="evidence" value="ECO:0007669"/>
    <property type="project" value="UniProtKB-KW"/>
</dbReference>
<dbReference type="GO" id="GO:0003724">
    <property type="term" value="F:RNA helicase activity"/>
    <property type="evidence" value="ECO:0007669"/>
    <property type="project" value="UniProtKB-EC"/>
</dbReference>
<dbReference type="CDD" id="cd17952">
    <property type="entry name" value="DEADc_DDX42"/>
    <property type="match status" value="1"/>
</dbReference>
<dbReference type="CDD" id="cd18787">
    <property type="entry name" value="SF2_C_DEAD"/>
    <property type="match status" value="1"/>
</dbReference>
<dbReference type="FunFam" id="3.40.50.300:FF:000079">
    <property type="entry name" value="probable ATP-dependent RNA helicase DDX17"/>
    <property type="match status" value="1"/>
</dbReference>
<dbReference type="Gene3D" id="3.40.50.300">
    <property type="entry name" value="P-loop containing nucleotide triphosphate hydrolases"/>
    <property type="match status" value="2"/>
</dbReference>
<dbReference type="InterPro" id="IPR011545">
    <property type="entry name" value="DEAD/DEAH_box_helicase_dom"/>
</dbReference>
<dbReference type="InterPro" id="IPR014001">
    <property type="entry name" value="Helicase_ATP-bd"/>
</dbReference>
<dbReference type="InterPro" id="IPR001650">
    <property type="entry name" value="Helicase_C-like"/>
</dbReference>
<dbReference type="InterPro" id="IPR027417">
    <property type="entry name" value="P-loop_NTPase"/>
</dbReference>
<dbReference type="InterPro" id="IPR000629">
    <property type="entry name" value="RNA-helicase_DEAD-box_CS"/>
</dbReference>
<dbReference type="InterPro" id="IPR014014">
    <property type="entry name" value="RNA_helicase_DEAD_Q_motif"/>
</dbReference>
<dbReference type="PANTHER" id="PTHR47958">
    <property type="entry name" value="ATP-DEPENDENT RNA HELICASE DBP3"/>
    <property type="match status" value="1"/>
</dbReference>
<dbReference type="Pfam" id="PF00270">
    <property type="entry name" value="DEAD"/>
    <property type="match status" value="1"/>
</dbReference>
<dbReference type="Pfam" id="PF00271">
    <property type="entry name" value="Helicase_C"/>
    <property type="match status" value="1"/>
</dbReference>
<dbReference type="SMART" id="SM00487">
    <property type="entry name" value="DEXDc"/>
    <property type="match status" value="1"/>
</dbReference>
<dbReference type="SMART" id="SM00490">
    <property type="entry name" value="HELICc"/>
    <property type="match status" value="1"/>
</dbReference>
<dbReference type="SUPFAM" id="SSF52540">
    <property type="entry name" value="P-loop containing nucleoside triphosphate hydrolases"/>
    <property type="match status" value="2"/>
</dbReference>
<dbReference type="PROSITE" id="PS00039">
    <property type="entry name" value="DEAD_ATP_HELICASE"/>
    <property type="match status" value="1"/>
</dbReference>
<dbReference type="PROSITE" id="PS51192">
    <property type="entry name" value="HELICASE_ATP_BIND_1"/>
    <property type="match status" value="1"/>
</dbReference>
<dbReference type="PROSITE" id="PS51194">
    <property type="entry name" value="HELICASE_CTER"/>
    <property type="match status" value="1"/>
</dbReference>
<dbReference type="PROSITE" id="PS51195">
    <property type="entry name" value="Q_MOTIF"/>
    <property type="match status" value="1"/>
</dbReference>
<reference key="1">
    <citation type="journal article" date="2005" name="Nature">
        <title>The genome of the social amoeba Dictyostelium discoideum.</title>
        <authorList>
            <person name="Eichinger L."/>
            <person name="Pachebat J.A."/>
            <person name="Gloeckner G."/>
            <person name="Rajandream M.A."/>
            <person name="Sucgang R."/>
            <person name="Berriman M."/>
            <person name="Song J."/>
            <person name="Olsen R."/>
            <person name="Szafranski K."/>
            <person name="Xu Q."/>
            <person name="Tunggal B."/>
            <person name="Kummerfeld S."/>
            <person name="Madera M."/>
            <person name="Konfortov B.A."/>
            <person name="Rivero F."/>
            <person name="Bankier A.T."/>
            <person name="Lehmann R."/>
            <person name="Hamlin N."/>
            <person name="Davies R."/>
            <person name="Gaudet P."/>
            <person name="Fey P."/>
            <person name="Pilcher K."/>
            <person name="Chen G."/>
            <person name="Saunders D."/>
            <person name="Sodergren E.J."/>
            <person name="Davis P."/>
            <person name="Kerhornou A."/>
            <person name="Nie X."/>
            <person name="Hall N."/>
            <person name="Anjard C."/>
            <person name="Hemphill L."/>
            <person name="Bason N."/>
            <person name="Farbrother P."/>
            <person name="Desany B."/>
            <person name="Just E."/>
            <person name="Morio T."/>
            <person name="Rost R."/>
            <person name="Churcher C.M."/>
            <person name="Cooper J."/>
            <person name="Haydock S."/>
            <person name="van Driessche N."/>
            <person name="Cronin A."/>
            <person name="Goodhead I."/>
            <person name="Muzny D.M."/>
            <person name="Mourier T."/>
            <person name="Pain A."/>
            <person name="Lu M."/>
            <person name="Harper D."/>
            <person name="Lindsay R."/>
            <person name="Hauser H."/>
            <person name="James K.D."/>
            <person name="Quiles M."/>
            <person name="Madan Babu M."/>
            <person name="Saito T."/>
            <person name="Buchrieser C."/>
            <person name="Wardroper A."/>
            <person name="Felder M."/>
            <person name="Thangavelu M."/>
            <person name="Johnson D."/>
            <person name="Knights A."/>
            <person name="Loulseged H."/>
            <person name="Mungall K.L."/>
            <person name="Oliver K."/>
            <person name="Price C."/>
            <person name="Quail M.A."/>
            <person name="Urushihara H."/>
            <person name="Hernandez J."/>
            <person name="Rabbinowitsch E."/>
            <person name="Steffen D."/>
            <person name="Sanders M."/>
            <person name="Ma J."/>
            <person name="Kohara Y."/>
            <person name="Sharp S."/>
            <person name="Simmonds M.N."/>
            <person name="Spiegler S."/>
            <person name="Tivey A."/>
            <person name="Sugano S."/>
            <person name="White B."/>
            <person name="Walker D."/>
            <person name="Woodward J.R."/>
            <person name="Winckler T."/>
            <person name="Tanaka Y."/>
            <person name="Shaulsky G."/>
            <person name="Schleicher M."/>
            <person name="Weinstock G.M."/>
            <person name="Rosenthal A."/>
            <person name="Cox E.C."/>
            <person name="Chisholm R.L."/>
            <person name="Gibbs R.A."/>
            <person name="Loomis W.F."/>
            <person name="Platzer M."/>
            <person name="Kay R.R."/>
            <person name="Williams J.G."/>
            <person name="Dear P.H."/>
            <person name="Noegel A.A."/>
            <person name="Barrell B.G."/>
            <person name="Kuspa A."/>
        </authorList>
    </citation>
    <scope>NUCLEOTIDE SEQUENCE [LARGE SCALE GENOMIC DNA]</scope>
    <source>
        <strain>AX4</strain>
    </source>
</reference>
<keyword id="KW-0067">ATP-binding</keyword>
<keyword id="KW-0347">Helicase</keyword>
<keyword id="KW-0378">Hydrolase</keyword>
<keyword id="KW-0547">Nucleotide-binding</keyword>
<keyword id="KW-0539">Nucleus</keyword>
<keyword id="KW-1185">Reference proteome</keyword>
<keyword id="KW-0694">RNA-binding</keyword>
<feature type="chain" id="PRO_0000327413" description="Probable ATP-dependent RNA helicase ddx42">
    <location>
        <begin position="1"/>
        <end position="986"/>
    </location>
</feature>
<feature type="domain" description="Helicase ATP-binding" evidence="2">
    <location>
        <begin position="336"/>
        <end position="511"/>
    </location>
</feature>
<feature type="domain" description="Helicase C-terminal" evidence="3">
    <location>
        <begin position="522"/>
        <end position="684"/>
    </location>
</feature>
<feature type="region of interest" description="Disordered" evidence="4">
    <location>
        <begin position="1"/>
        <end position="149"/>
    </location>
</feature>
<feature type="region of interest" description="Disordered" evidence="4">
    <location>
        <begin position="165"/>
        <end position="192"/>
    </location>
</feature>
<feature type="region of interest" description="Disordered" evidence="4">
    <location>
        <begin position="206"/>
        <end position="252"/>
    </location>
</feature>
<feature type="region of interest" description="Disordered" evidence="4">
    <location>
        <begin position="688"/>
        <end position="986"/>
    </location>
</feature>
<feature type="short sequence motif" description="Q motif">
    <location>
        <begin position="305"/>
        <end position="333"/>
    </location>
</feature>
<feature type="short sequence motif" description="DEAD box">
    <location>
        <begin position="459"/>
        <end position="462"/>
    </location>
</feature>
<feature type="compositionally biased region" description="Low complexity" evidence="4">
    <location>
        <begin position="29"/>
        <end position="82"/>
    </location>
</feature>
<feature type="compositionally biased region" description="Polar residues" evidence="4">
    <location>
        <begin position="105"/>
        <end position="117"/>
    </location>
</feature>
<feature type="compositionally biased region" description="Low complexity" evidence="4">
    <location>
        <begin position="119"/>
        <end position="137"/>
    </location>
</feature>
<feature type="compositionally biased region" description="Acidic residues" evidence="4">
    <location>
        <begin position="217"/>
        <end position="236"/>
    </location>
</feature>
<feature type="compositionally biased region" description="Gly residues" evidence="4">
    <location>
        <begin position="696"/>
        <end position="723"/>
    </location>
</feature>
<feature type="compositionally biased region" description="Low complexity" evidence="4">
    <location>
        <begin position="753"/>
        <end position="764"/>
    </location>
</feature>
<feature type="compositionally biased region" description="Low complexity" evidence="4">
    <location>
        <begin position="771"/>
        <end position="978"/>
    </location>
</feature>
<feature type="binding site" evidence="2">
    <location>
        <begin position="349"/>
        <end position="356"/>
    </location>
    <ligand>
        <name>ATP</name>
        <dbReference type="ChEBI" id="CHEBI:30616"/>
    </ligand>
</feature>
<organism>
    <name type="scientific">Dictyostelium discoideum</name>
    <name type="common">Social amoeba</name>
    <dbReference type="NCBI Taxonomy" id="44689"/>
    <lineage>
        <taxon>Eukaryota</taxon>
        <taxon>Amoebozoa</taxon>
        <taxon>Evosea</taxon>
        <taxon>Eumycetozoa</taxon>
        <taxon>Dictyostelia</taxon>
        <taxon>Dictyosteliales</taxon>
        <taxon>Dictyosteliaceae</taxon>
        <taxon>Dictyostelium</taxon>
    </lineage>
</organism>
<sequence>MSKRVSAFGAEGDDEPQEKPMKPFISFSSNINNNNNSNNNNNNNNNNNNNNNNNNNKNNIGTGINLNIKNNNNINNNNNKSGFPVKKSRFNGEDDDDDYFFSNVPPKSSMTTLNKSPPNFENASSNNNNNNNNNNQESDSKNQNEDEDDEIDPLDAFMENVNAQAAIDNSKSIEKGQQQQQSLKSKRDDIDNEDDEEIFYKLRQKQLANKSSKQQQDDDVDYSSLDDDDGYFDDEESLKNGQSKGKRIIEPLPPIDHSKEEYIEFNKIFYEEHPDIANLTEEQVFEIRKNLDIRMTGTDLINPVTSFGHYGFDDILLQAIAKQSIETPTPIQKQAIPIALSGRDLIAIAKTGSGKTATFIWPSISHIMDQPYLEKGDGPIALFLAPTRELAHQIYLETLKYSKYFKLKTTVLYGGVSKQQQCKELKAGCEIIVATPGRLIDMIKLKATKLNRVSYLVLDEADKMFDFGFGPQVLSIVNHVRPDRQTLLFSATFKPNVEEFARTILSDPIKISIGMIGSANSDITQIVQVLKSDSDKWNWLTNQLALLLSQGSVLIFVSTKVAVEQLSSNLTKFGFQTCTLHGDKNQIERSQTIQTFKEGKINILIATDVAARGLDIPLIKNVVNYDTSRDIESHTHRIGRTGRAGNTGVAYTLITPKDIHFSVDLIKNLESASQFVPPELIDVAMNNPHFKRERGGGGGGSNRGRGRGGGGVGYRRNSRGGGVAFNSNRDSSRSDSQNKFIPAQSVEGGRLFNPNNTDNSEINNENEKSINNENKFSNNNSGSSNDRNSINYRNNSFNNNSNNTNNSGNSNFNNSNSNNGYSNNNYNNNYKNNSNYNNSNNNNNSYYNNNNSNNNNNSNYNNSSNNNNNNNNNYRNGNNNNNYNNNNYYNNNNSNNNSSNNNNSNNNSSNNNFNNNFNNNNNNNDNSNFNRALPFNDFNNNNNNSNNNNFNYNNNFNNSYNANNSNHYKNNNNSNNFNQRSQYNRR</sequence>
<proteinExistence type="inferred from homology"/>
<gene>
    <name type="primary">ddx42</name>
    <name type="ORF">DDB_G0288501</name>
</gene>
<protein>
    <recommendedName>
        <fullName>Probable ATP-dependent RNA helicase ddx42</fullName>
        <ecNumber>3.6.4.13</ecNumber>
    </recommendedName>
    <alternativeName>
        <fullName>DEAD box protein 42</fullName>
    </alternativeName>
</protein>
<name>DDX42_DICDI</name>
<comment type="function">
    <text evidence="1">probable ATP-dependent RNA helicase which may bind to partially double-stranded RNAs (dsRNAs) in order to unwind RNA secondary structures.</text>
</comment>
<comment type="catalytic activity">
    <reaction>
        <text>ATP + H2O = ADP + phosphate + H(+)</text>
        <dbReference type="Rhea" id="RHEA:13065"/>
        <dbReference type="ChEBI" id="CHEBI:15377"/>
        <dbReference type="ChEBI" id="CHEBI:15378"/>
        <dbReference type="ChEBI" id="CHEBI:30616"/>
        <dbReference type="ChEBI" id="CHEBI:43474"/>
        <dbReference type="ChEBI" id="CHEBI:456216"/>
        <dbReference type="EC" id="3.6.4.13"/>
    </reaction>
</comment>
<comment type="subcellular location">
    <subcellularLocation>
        <location evidence="1">Nucleus</location>
    </subcellularLocation>
</comment>
<comment type="domain">
    <text>The Q motif is unique to and characteristic of the DEAD box family of RNA helicases and controls ATP binding and hydrolysis.</text>
</comment>
<comment type="similarity">
    <text evidence="5">Belongs to the DEAD box helicase family. DDX42 subfamily.</text>
</comment>